<comment type="catalytic activity">
    <reaction>
        <text>2 pyruvate + H(+) = (2S)-2-acetolactate + CO2</text>
        <dbReference type="Rhea" id="RHEA:25249"/>
        <dbReference type="ChEBI" id="CHEBI:15361"/>
        <dbReference type="ChEBI" id="CHEBI:15378"/>
        <dbReference type="ChEBI" id="CHEBI:16526"/>
        <dbReference type="ChEBI" id="CHEBI:58476"/>
        <dbReference type="EC" id="2.2.1.6"/>
    </reaction>
</comment>
<comment type="pathway">
    <text>Amino-acid biosynthesis; L-isoleucine biosynthesis; L-isoleucine from 2-oxobutanoate: step 1/4.</text>
</comment>
<comment type="pathway">
    <text>Amino-acid biosynthesis; L-valine biosynthesis; L-valine from pyruvate: step 1/4.</text>
</comment>
<comment type="subunit">
    <text evidence="1">Dimer of large and small chains.</text>
</comment>
<comment type="similarity">
    <text evidence="3">Belongs to the acetolactate synthase small subunit family.</text>
</comment>
<proteinExistence type="inferred from homology"/>
<sequence length="159" mass="18174">MKHRILSILLENESGALSRVVGLFSQRGYNIESITVAPTEDLSISKITIQTFGDKKVIEQIGKQLHKLIDVLKVTEIEDEEHFKREIMLIKINNTYDQYRKVQDITNAFRGYIISATSNISIIQLSGTNKNLDTYIEIMKKLTNIIEISRSGIISIYKN</sequence>
<name>ILVH_BUCBP</name>
<gene>
    <name type="primary">ilvH</name>
    <name type="ordered locus">bbp_207</name>
</gene>
<organism>
    <name type="scientific">Buchnera aphidicola subsp. Baizongia pistaciae (strain Bp)</name>
    <dbReference type="NCBI Taxonomy" id="224915"/>
    <lineage>
        <taxon>Bacteria</taxon>
        <taxon>Pseudomonadati</taxon>
        <taxon>Pseudomonadota</taxon>
        <taxon>Gammaproteobacteria</taxon>
        <taxon>Enterobacterales</taxon>
        <taxon>Erwiniaceae</taxon>
        <taxon>Buchnera</taxon>
    </lineage>
</organism>
<accession>Q89AP8</accession>
<reference key="1">
    <citation type="journal article" date="2003" name="Proc. Natl. Acad. Sci. U.S.A.">
        <title>Reductive genome evolution in Buchnera aphidicola.</title>
        <authorList>
            <person name="van Ham R.C.H.J."/>
            <person name="Kamerbeek J."/>
            <person name="Palacios C."/>
            <person name="Rausell C."/>
            <person name="Abascal F."/>
            <person name="Bastolla U."/>
            <person name="Fernandez J.M."/>
            <person name="Jimenez L."/>
            <person name="Postigo M."/>
            <person name="Silva F.J."/>
            <person name="Tamames J."/>
            <person name="Viguera E."/>
            <person name="Latorre A."/>
            <person name="Valencia A."/>
            <person name="Moran F."/>
            <person name="Moya A."/>
        </authorList>
    </citation>
    <scope>NUCLEOTIDE SEQUENCE [LARGE SCALE GENOMIC DNA]</scope>
    <source>
        <strain>Bp</strain>
    </source>
</reference>
<evidence type="ECO:0000250" key="1"/>
<evidence type="ECO:0000255" key="2">
    <source>
        <dbReference type="PROSITE-ProRule" id="PRU01007"/>
    </source>
</evidence>
<evidence type="ECO:0000305" key="3"/>
<protein>
    <recommendedName>
        <fullName>Acetolactate synthase small subunit</fullName>
        <ecNumber>2.2.1.6</ecNumber>
    </recommendedName>
    <alternativeName>
        <fullName>Acetohydroxy-acid synthase small subunit</fullName>
        <shortName>AHAS</shortName>
        <shortName>ALS</shortName>
    </alternativeName>
</protein>
<feature type="chain" id="PRO_0000151409" description="Acetolactate synthase small subunit">
    <location>
        <begin position="1"/>
        <end position="159"/>
    </location>
</feature>
<feature type="domain" description="ACT" evidence="2">
    <location>
        <begin position="5"/>
        <end position="79"/>
    </location>
</feature>
<keyword id="KW-0028">Amino-acid biosynthesis</keyword>
<keyword id="KW-0100">Branched-chain amino acid biosynthesis</keyword>
<keyword id="KW-1185">Reference proteome</keyword>
<keyword id="KW-0808">Transferase</keyword>
<dbReference type="EC" id="2.2.1.6"/>
<dbReference type="EMBL" id="AE016826">
    <property type="protein sequence ID" value="AAO26939.1"/>
    <property type="molecule type" value="Genomic_DNA"/>
</dbReference>
<dbReference type="RefSeq" id="WP_011091340.1">
    <property type="nucleotide sequence ID" value="NC_004545.1"/>
</dbReference>
<dbReference type="SMR" id="Q89AP8"/>
<dbReference type="STRING" id="224915.bbp_207"/>
<dbReference type="KEGG" id="bab:bbp_207"/>
<dbReference type="eggNOG" id="COG0440">
    <property type="taxonomic scope" value="Bacteria"/>
</dbReference>
<dbReference type="HOGENOM" id="CLU_055003_1_3_6"/>
<dbReference type="OrthoDB" id="9787365at2"/>
<dbReference type="UniPathway" id="UPA00047">
    <property type="reaction ID" value="UER00055"/>
</dbReference>
<dbReference type="UniPathway" id="UPA00049">
    <property type="reaction ID" value="UER00059"/>
</dbReference>
<dbReference type="Proteomes" id="UP000000601">
    <property type="component" value="Chromosome"/>
</dbReference>
<dbReference type="GO" id="GO:0005829">
    <property type="term" value="C:cytosol"/>
    <property type="evidence" value="ECO:0007669"/>
    <property type="project" value="TreeGrafter"/>
</dbReference>
<dbReference type="GO" id="GO:0003984">
    <property type="term" value="F:acetolactate synthase activity"/>
    <property type="evidence" value="ECO:0007669"/>
    <property type="project" value="UniProtKB-EC"/>
</dbReference>
<dbReference type="GO" id="GO:1990610">
    <property type="term" value="F:acetolactate synthase regulator activity"/>
    <property type="evidence" value="ECO:0007669"/>
    <property type="project" value="InterPro"/>
</dbReference>
<dbReference type="GO" id="GO:0009097">
    <property type="term" value="P:isoleucine biosynthetic process"/>
    <property type="evidence" value="ECO:0007669"/>
    <property type="project" value="UniProtKB-UniPathway"/>
</dbReference>
<dbReference type="GO" id="GO:0009099">
    <property type="term" value="P:L-valine biosynthetic process"/>
    <property type="evidence" value="ECO:0007669"/>
    <property type="project" value="UniProtKB-UniPathway"/>
</dbReference>
<dbReference type="CDD" id="cd04878">
    <property type="entry name" value="ACT_AHAS"/>
    <property type="match status" value="1"/>
</dbReference>
<dbReference type="FunFam" id="3.30.70.260:FF:000001">
    <property type="entry name" value="Acetolactate synthase, small subunit"/>
    <property type="match status" value="1"/>
</dbReference>
<dbReference type="Gene3D" id="3.30.70.260">
    <property type="match status" value="1"/>
</dbReference>
<dbReference type="Gene3D" id="3.30.70.1150">
    <property type="entry name" value="ACT-like. Chain A, domain 2"/>
    <property type="match status" value="1"/>
</dbReference>
<dbReference type="InterPro" id="IPR004789">
    <property type="entry name" value="Acetalactate_synth_ssu"/>
</dbReference>
<dbReference type="InterPro" id="IPR027271">
    <property type="entry name" value="Acetolactate_synth/TF_NikR_C"/>
</dbReference>
<dbReference type="InterPro" id="IPR019455">
    <property type="entry name" value="Acetolactate_synth_ssu_C"/>
</dbReference>
<dbReference type="InterPro" id="IPR045865">
    <property type="entry name" value="ACT-like_dom_sf"/>
</dbReference>
<dbReference type="InterPro" id="IPR002912">
    <property type="entry name" value="ACT_dom"/>
</dbReference>
<dbReference type="InterPro" id="IPR039557">
    <property type="entry name" value="AHAS_ACT"/>
</dbReference>
<dbReference type="InterPro" id="IPR054480">
    <property type="entry name" value="AHAS_small-like_ACT"/>
</dbReference>
<dbReference type="NCBIfam" id="TIGR00119">
    <property type="entry name" value="acolac_sm"/>
    <property type="match status" value="1"/>
</dbReference>
<dbReference type="NCBIfam" id="NF008864">
    <property type="entry name" value="PRK11895.1"/>
    <property type="match status" value="1"/>
</dbReference>
<dbReference type="PANTHER" id="PTHR30239">
    <property type="entry name" value="ACETOLACTATE SYNTHASE SMALL SUBUNIT"/>
    <property type="match status" value="1"/>
</dbReference>
<dbReference type="PANTHER" id="PTHR30239:SF0">
    <property type="entry name" value="ACETOLACTATE SYNTHASE SMALL SUBUNIT 1, CHLOROPLASTIC"/>
    <property type="match status" value="1"/>
</dbReference>
<dbReference type="Pfam" id="PF22629">
    <property type="entry name" value="ACT_AHAS_ss"/>
    <property type="match status" value="1"/>
</dbReference>
<dbReference type="Pfam" id="PF10369">
    <property type="entry name" value="ALS_ss_C"/>
    <property type="match status" value="1"/>
</dbReference>
<dbReference type="SUPFAM" id="SSF55021">
    <property type="entry name" value="ACT-like"/>
    <property type="match status" value="2"/>
</dbReference>
<dbReference type="PROSITE" id="PS51671">
    <property type="entry name" value="ACT"/>
    <property type="match status" value="1"/>
</dbReference>